<name>GPMI_NOSP7</name>
<dbReference type="EC" id="5.4.2.12" evidence="1"/>
<dbReference type="EMBL" id="CP001037">
    <property type="protein sequence ID" value="ACC82724.1"/>
    <property type="molecule type" value="Genomic_DNA"/>
</dbReference>
<dbReference type="RefSeq" id="WP_012410687.1">
    <property type="nucleotide sequence ID" value="NC_010628.1"/>
</dbReference>
<dbReference type="SMR" id="B2ITL6"/>
<dbReference type="STRING" id="63737.Npun_R4351"/>
<dbReference type="EnsemblBacteria" id="ACC82724">
    <property type="protein sequence ID" value="ACC82724"/>
    <property type="gene ID" value="Npun_R4351"/>
</dbReference>
<dbReference type="KEGG" id="npu:Npun_R4351"/>
<dbReference type="eggNOG" id="COG0696">
    <property type="taxonomic scope" value="Bacteria"/>
</dbReference>
<dbReference type="HOGENOM" id="CLU_026099_2_0_3"/>
<dbReference type="OrthoDB" id="9800863at2"/>
<dbReference type="PhylomeDB" id="B2ITL6"/>
<dbReference type="UniPathway" id="UPA00109">
    <property type="reaction ID" value="UER00186"/>
</dbReference>
<dbReference type="Proteomes" id="UP000001191">
    <property type="component" value="Chromosome"/>
</dbReference>
<dbReference type="GO" id="GO:0005829">
    <property type="term" value="C:cytosol"/>
    <property type="evidence" value="ECO:0007669"/>
    <property type="project" value="TreeGrafter"/>
</dbReference>
<dbReference type="GO" id="GO:0030145">
    <property type="term" value="F:manganese ion binding"/>
    <property type="evidence" value="ECO:0007669"/>
    <property type="project" value="UniProtKB-UniRule"/>
</dbReference>
<dbReference type="GO" id="GO:0004619">
    <property type="term" value="F:phosphoglycerate mutase activity"/>
    <property type="evidence" value="ECO:0007669"/>
    <property type="project" value="UniProtKB-EC"/>
</dbReference>
<dbReference type="GO" id="GO:0006007">
    <property type="term" value="P:glucose catabolic process"/>
    <property type="evidence" value="ECO:0007669"/>
    <property type="project" value="InterPro"/>
</dbReference>
<dbReference type="GO" id="GO:0006096">
    <property type="term" value="P:glycolytic process"/>
    <property type="evidence" value="ECO:0007669"/>
    <property type="project" value="UniProtKB-UniRule"/>
</dbReference>
<dbReference type="CDD" id="cd16010">
    <property type="entry name" value="iPGM"/>
    <property type="match status" value="1"/>
</dbReference>
<dbReference type="FunFam" id="3.40.1450.10:FF:000002">
    <property type="entry name" value="2,3-bisphosphoglycerate-independent phosphoglycerate mutase"/>
    <property type="match status" value="1"/>
</dbReference>
<dbReference type="Gene3D" id="3.40.720.10">
    <property type="entry name" value="Alkaline Phosphatase, subunit A"/>
    <property type="match status" value="1"/>
</dbReference>
<dbReference type="Gene3D" id="3.40.1450.10">
    <property type="entry name" value="BPG-independent phosphoglycerate mutase, domain B"/>
    <property type="match status" value="1"/>
</dbReference>
<dbReference type="HAMAP" id="MF_01038">
    <property type="entry name" value="GpmI"/>
    <property type="match status" value="1"/>
</dbReference>
<dbReference type="InterPro" id="IPR017850">
    <property type="entry name" value="Alkaline_phosphatase_core_sf"/>
</dbReference>
<dbReference type="InterPro" id="IPR011258">
    <property type="entry name" value="BPG-indep_PGM_N"/>
</dbReference>
<dbReference type="InterPro" id="IPR006124">
    <property type="entry name" value="Metalloenzyme"/>
</dbReference>
<dbReference type="InterPro" id="IPR036646">
    <property type="entry name" value="PGAM_B_sf"/>
</dbReference>
<dbReference type="InterPro" id="IPR005995">
    <property type="entry name" value="Pgm_bpd_ind"/>
</dbReference>
<dbReference type="NCBIfam" id="TIGR01307">
    <property type="entry name" value="pgm_bpd_ind"/>
    <property type="match status" value="1"/>
</dbReference>
<dbReference type="PANTHER" id="PTHR31637">
    <property type="entry name" value="2,3-BISPHOSPHOGLYCERATE-INDEPENDENT PHOSPHOGLYCERATE MUTASE"/>
    <property type="match status" value="1"/>
</dbReference>
<dbReference type="PANTHER" id="PTHR31637:SF0">
    <property type="entry name" value="2,3-BISPHOSPHOGLYCERATE-INDEPENDENT PHOSPHOGLYCERATE MUTASE"/>
    <property type="match status" value="1"/>
</dbReference>
<dbReference type="Pfam" id="PF06415">
    <property type="entry name" value="iPGM_N"/>
    <property type="match status" value="1"/>
</dbReference>
<dbReference type="Pfam" id="PF01676">
    <property type="entry name" value="Metalloenzyme"/>
    <property type="match status" value="1"/>
</dbReference>
<dbReference type="PIRSF" id="PIRSF001492">
    <property type="entry name" value="IPGAM"/>
    <property type="match status" value="1"/>
</dbReference>
<dbReference type="SUPFAM" id="SSF64158">
    <property type="entry name" value="2,3-Bisphosphoglycerate-independent phosphoglycerate mutase, substrate-binding domain"/>
    <property type="match status" value="1"/>
</dbReference>
<dbReference type="SUPFAM" id="SSF53649">
    <property type="entry name" value="Alkaline phosphatase-like"/>
    <property type="match status" value="1"/>
</dbReference>
<proteinExistence type="inferred from homology"/>
<protein>
    <recommendedName>
        <fullName evidence="1">2,3-bisphosphoglycerate-independent phosphoglycerate mutase</fullName>
        <shortName evidence="1">BPG-independent PGAM</shortName>
        <shortName evidence="1">Phosphoglyceromutase</shortName>
        <shortName evidence="1">iPGM</shortName>
        <ecNumber evidence="1">5.4.2.12</ecNumber>
    </recommendedName>
</protein>
<evidence type="ECO:0000255" key="1">
    <source>
        <dbReference type="HAMAP-Rule" id="MF_01038"/>
    </source>
</evidence>
<organism>
    <name type="scientific">Nostoc punctiforme (strain ATCC 29133 / PCC 73102)</name>
    <dbReference type="NCBI Taxonomy" id="63737"/>
    <lineage>
        <taxon>Bacteria</taxon>
        <taxon>Bacillati</taxon>
        <taxon>Cyanobacteriota</taxon>
        <taxon>Cyanophyceae</taxon>
        <taxon>Nostocales</taxon>
        <taxon>Nostocaceae</taxon>
        <taxon>Nostoc</taxon>
    </lineage>
</organism>
<comment type="function">
    <text evidence="1">Catalyzes the interconversion of 2-phosphoglycerate and 3-phosphoglycerate.</text>
</comment>
<comment type="catalytic activity">
    <reaction evidence="1">
        <text>(2R)-2-phosphoglycerate = (2R)-3-phosphoglycerate</text>
        <dbReference type="Rhea" id="RHEA:15901"/>
        <dbReference type="ChEBI" id="CHEBI:58272"/>
        <dbReference type="ChEBI" id="CHEBI:58289"/>
        <dbReference type="EC" id="5.4.2.12"/>
    </reaction>
</comment>
<comment type="cofactor">
    <cofactor evidence="1">
        <name>Mn(2+)</name>
        <dbReference type="ChEBI" id="CHEBI:29035"/>
    </cofactor>
    <text evidence="1">Binds 2 manganese ions per subunit.</text>
</comment>
<comment type="pathway">
    <text evidence="1">Carbohydrate degradation; glycolysis; pyruvate from D-glyceraldehyde 3-phosphate: step 3/5.</text>
</comment>
<comment type="subunit">
    <text evidence="1">Monomer.</text>
</comment>
<comment type="similarity">
    <text evidence="1">Belongs to the BPG-independent phosphoglycerate mutase family.</text>
</comment>
<gene>
    <name evidence="1" type="primary">gpmI</name>
    <name type="ordered locus">Npun_R4351</name>
</gene>
<reference key="1">
    <citation type="journal article" date="2013" name="Plant Physiol.">
        <title>A Nostoc punctiforme Sugar Transporter Necessary to Establish a Cyanobacterium-Plant Symbiosis.</title>
        <authorList>
            <person name="Ekman M."/>
            <person name="Picossi S."/>
            <person name="Campbell E.L."/>
            <person name="Meeks J.C."/>
            <person name="Flores E."/>
        </authorList>
    </citation>
    <scope>NUCLEOTIDE SEQUENCE [LARGE SCALE GENOMIC DNA]</scope>
    <source>
        <strain>ATCC 29133 / PCC 73102</strain>
    </source>
</reference>
<accession>B2ITL6</accession>
<sequence length="532" mass="57790">MTKAPVAPVVLVILDGWGYCEEKRGNAIVAAKTPIVDSLWAAYPHTLIRTSGKAVGLPEGQMGNSEVGHLNIGAGRVVPQELVRISDAVEDGSIALNPALVKICQEVRSRNSKLHLVGLCSEGGVHSHITHLFGLLDLAKNQQIPEVCIHAITDGRDTAPTDGVRAITMLQNYIDRTGIGRIVTLSGRYYAMDRDHRWDRVKRAYDVMTQDGVGDNRTAVEILQASYAEGVKDEFVNPIRIAPGAIEPGDGVIFFNFRPDRSRQLTQALVSPTFNGFERQQITPLSFVTFTQYDSDLPVAVAFEPQNLSNILGEVIANHGLNQFRTAETEKYAHVTYFFNGGLEEPFAGEDRELVSSPMVATYDHAPAMSAVAVTDVAIAAIQKGTYSLVVINYANPDMVGHTGQIDATITAIETVDRCLGRLLESVIKAGGTTIITADHGNAEYMLDDGGNPWTAHTTNPVPFILVEGEKVKIPGYGTNVELRSDGKLSDIAPTILEILQLPQPPEMTGRSLLKTADYELQRTRTPVQVGL</sequence>
<keyword id="KW-0324">Glycolysis</keyword>
<keyword id="KW-0413">Isomerase</keyword>
<keyword id="KW-0464">Manganese</keyword>
<keyword id="KW-0479">Metal-binding</keyword>
<keyword id="KW-1185">Reference proteome</keyword>
<feature type="chain" id="PRO_1000135905" description="2,3-bisphosphoglycerate-independent phosphoglycerate mutase">
    <location>
        <begin position="1"/>
        <end position="532"/>
    </location>
</feature>
<feature type="active site" description="Phosphoserine intermediate" evidence="1">
    <location>
        <position position="65"/>
    </location>
</feature>
<feature type="binding site" evidence="1">
    <location>
        <position position="15"/>
    </location>
    <ligand>
        <name>Mn(2+)</name>
        <dbReference type="ChEBI" id="CHEBI:29035"/>
        <label>2</label>
    </ligand>
</feature>
<feature type="binding site" evidence="1">
    <location>
        <position position="65"/>
    </location>
    <ligand>
        <name>Mn(2+)</name>
        <dbReference type="ChEBI" id="CHEBI:29035"/>
        <label>2</label>
    </ligand>
</feature>
<feature type="binding site" evidence="1">
    <location>
        <position position="126"/>
    </location>
    <ligand>
        <name>substrate</name>
    </ligand>
</feature>
<feature type="binding site" evidence="1">
    <location>
        <begin position="156"/>
        <end position="157"/>
    </location>
    <ligand>
        <name>substrate</name>
    </ligand>
</feature>
<feature type="binding site" evidence="1">
    <location>
        <position position="188"/>
    </location>
    <ligand>
        <name>substrate</name>
    </ligand>
</feature>
<feature type="binding site" evidence="1">
    <location>
        <position position="194"/>
    </location>
    <ligand>
        <name>substrate</name>
    </ligand>
</feature>
<feature type="binding site" evidence="1">
    <location>
        <begin position="258"/>
        <end position="261"/>
    </location>
    <ligand>
        <name>substrate</name>
    </ligand>
</feature>
<feature type="binding site" evidence="1">
    <location>
        <position position="331"/>
    </location>
    <ligand>
        <name>substrate</name>
    </ligand>
</feature>
<feature type="binding site" evidence="1">
    <location>
        <position position="398"/>
    </location>
    <ligand>
        <name>Mn(2+)</name>
        <dbReference type="ChEBI" id="CHEBI:29035"/>
        <label>1</label>
    </ligand>
</feature>
<feature type="binding site" evidence="1">
    <location>
        <position position="402"/>
    </location>
    <ligand>
        <name>Mn(2+)</name>
        <dbReference type="ChEBI" id="CHEBI:29035"/>
        <label>1</label>
    </ligand>
</feature>
<feature type="binding site" evidence="1">
    <location>
        <position position="439"/>
    </location>
    <ligand>
        <name>Mn(2+)</name>
        <dbReference type="ChEBI" id="CHEBI:29035"/>
        <label>2</label>
    </ligand>
</feature>
<feature type="binding site" evidence="1">
    <location>
        <position position="440"/>
    </location>
    <ligand>
        <name>Mn(2+)</name>
        <dbReference type="ChEBI" id="CHEBI:29035"/>
        <label>2</label>
    </ligand>
</feature>
<feature type="binding site" evidence="1">
    <location>
        <position position="457"/>
    </location>
    <ligand>
        <name>Mn(2+)</name>
        <dbReference type="ChEBI" id="CHEBI:29035"/>
        <label>1</label>
    </ligand>
</feature>